<sequence length="286" mass="32331">MPELPEVEVVRRGLERWVAHRTVADVEVLHPRAVRRHTAGGEDFAHRLKGRRVGVPSRRGKYLWLPLETTDTAVLAHLGMSGQLLVQPHDCADERHLRIRVRFADALGTELRFVDQRTFGGLSLHDTTPDGLPDVIAHIARDPLDPLFDDAAFHEALRRKRTTVKRALLDQSLISGVGNIYADEALWRARIHYERPTAGFTRPRTAELLGHVRDVMNAALAVGGTSFDSLYVNVNGESGYFDRSLDAYGREGLPCRRCATPMRRRPWMNRSSYFCPKCQRAPRVTV</sequence>
<reference key="1">
    <citation type="journal article" date="2001" name="Proc. Natl. Acad. Sci. U.S.A.">
        <title>Genome sequence of an industrial microorganism Streptomyces avermitilis: deducing the ability of producing secondary metabolites.</title>
        <authorList>
            <person name="Omura S."/>
            <person name="Ikeda H."/>
            <person name="Ishikawa J."/>
            <person name="Hanamoto A."/>
            <person name="Takahashi C."/>
            <person name="Shinose M."/>
            <person name="Takahashi Y."/>
            <person name="Horikawa H."/>
            <person name="Nakazawa H."/>
            <person name="Osonoe T."/>
            <person name="Kikuchi H."/>
            <person name="Shiba T."/>
            <person name="Sakaki Y."/>
            <person name="Hattori M."/>
        </authorList>
    </citation>
    <scope>NUCLEOTIDE SEQUENCE [LARGE SCALE GENOMIC DNA]</scope>
    <source>
        <strain>ATCC 31267 / DSM 46492 / JCM 5070 / NBRC 14893 / NCIMB 12804 / NRRL 8165 / MA-4680</strain>
    </source>
</reference>
<reference key="2">
    <citation type="journal article" date="2003" name="Nat. Biotechnol.">
        <title>Complete genome sequence and comparative analysis of the industrial microorganism Streptomyces avermitilis.</title>
        <authorList>
            <person name="Ikeda H."/>
            <person name="Ishikawa J."/>
            <person name="Hanamoto A."/>
            <person name="Shinose M."/>
            <person name="Kikuchi H."/>
            <person name="Shiba T."/>
            <person name="Sakaki Y."/>
            <person name="Hattori M."/>
            <person name="Omura S."/>
        </authorList>
    </citation>
    <scope>NUCLEOTIDE SEQUENCE [LARGE SCALE GENOMIC DNA]</scope>
    <source>
        <strain>ATCC 31267 / DSM 46492 / JCM 5070 / NBRC 14893 / NCIMB 12804 / NRRL 8165 / MA-4680</strain>
    </source>
</reference>
<organism>
    <name type="scientific">Streptomyces avermitilis (strain ATCC 31267 / DSM 46492 / JCM 5070 / NBRC 14893 / NCIMB 12804 / NRRL 8165 / MA-4680)</name>
    <dbReference type="NCBI Taxonomy" id="227882"/>
    <lineage>
        <taxon>Bacteria</taxon>
        <taxon>Bacillati</taxon>
        <taxon>Actinomycetota</taxon>
        <taxon>Actinomycetes</taxon>
        <taxon>Kitasatosporales</taxon>
        <taxon>Streptomycetaceae</taxon>
        <taxon>Streptomyces</taxon>
    </lineage>
</organism>
<name>FPG_STRAW</name>
<comment type="function">
    <text evidence="2">Involved in base excision repair of DNA damaged by oxidation or by mutagenic agents. Acts as a DNA glycosylase that recognizes and removes damaged bases. Has a preference for oxidized purines, such as 7,8-dihydro-8-oxoguanine (8-oxoG). Has AP (apurinic/apyrimidinic) lyase activity and introduces nicks in the DNA strand. Cleaves the DNA backbone by beta-delta elimination to generate a single-strand break at the site of the removed base with both 3'- and 5'-phosphates.</text>
</comment>
<comment type="catalytic activity">
    <reaction evidence="2">
        <text>Hydrolysis of DNA containing ring-opened 7-methylguanine residues, releasing 2,6-diamino-4-hydroxy-5-(N-methyl)formamidopyrimidine.</text>
        <dbReference type="EC" id="3.2.2.23"/>
    </reaction>
</comment>
<comment type="catalytic activity">
    <reaction evidence="2">
        <text>2'-deoxyribonucleotide-(2'-deoxyribose 5'-phosphate)-2'-deoxyribonucleotide-DNA = a 3'-end 2'-deoxyribonucleotide-(2,3-dehydro-2,3-deoxyribose 5'-phosphate)-DNA + a 5'-end 5'-phospho-2'-deoxyribonucleoside-DNA + H(+)</text>
        <dbReference type="Rhea" id="RHEA:66592"/>
        <dbReference type="Rhea" id="RHEA-COMP:13180"/>
        <dbReference type="Rhea" id="RHEA-COMP:16897"/>
        <dbReference type="Rhea" id="RHEA-COMP:17067"/>
        <dbReference type="ChEBI" id="CHEBI:15378"/>
        <dbReference type="ChEBI" id="CHEBI:136412"/>
        <dbReference type="ChEBI" id="CHEBI:157695"/>
        <dbReference type="ChEBI" id="CHEBI:167181"/>
        <dbReference type="EC" id="4.2.99.18"/>
    </reaction>
</comment>
<comment type="cofactor">
    <cofactor evidence="2">
        <name>Zn(2+)</name>
        <dbReference type="ChEBI" id="CHEBI:29105"/>
    </cofactor>
    <text evidence="2">Binds 1 zinc ion per subunit.</text>
</comment>
<comment type="subunit">
    <text evidence="2">Monomer.</text>
</comment>
<comment type="similarity">
    <text evidence="2">Belongs to the FPG family.</text>
</comment>
<protein>
    <recommendedName>
        <fullName evidence="2">Formamidopyrimidine-DNA glycosylase</fullName>
        <shortName evidence="2">Fapy-DNA glycosylase</shortName>
        <ecNumber evidence="2">3.2.2.23</ecNumber>
    </recommendedName>
    <alternativeName>
        <fullName evidence="2">DNA-(apurinic or apyrimidinic site) lyase MutM</fullName>
        <shortName evidence="2">AP lyase MutM</shortName>
        <ecNumber evidence="2">4.2.99.18</ecNumber>
    </alternativeName>
</protein>
<dbReference type="EC" id="3.2.2.23" evidence="2"/>
<dbReference type="EC" id="4.2.99.18" evidence="2"/>
<dbReference type="EMBL" id="BA000030">
    <property type="protein sequence ID" value="BAC70375.1"/>
    <property type="molecule type" value="Genomic_DNA"/>
</dbReference>
<dbReference type="RefSeq" id="WP_010984098.1">
    <property type="nucleotide sequence ID" value="NZ_JZJK01000071.1"/>
</dbReference>
<dbReference type="SMR" id="Q82JU0"/>
<dbReference type="GeneID" id="41539747"/>
<dbReference type="KEGG" id="sma:SAVERM_2664"/>
<dbReference type="eggNOG" id="COG0266">
    <property type="taxonomic scope" value="Bacteria"/>
</dbReference>
<dbReference type="HOGENOM" id="CLU_038423_1_2_11"/>
<dbReference type="OrthoDB" id="9800855at2"/>
<dbReference type="Proteomes" id="UP000000428">
    <property type="component" value="Chromosome"/>
</dbReference>
<dbReference type="GO" id="GO:0034039">
    <property type="term" value="F:8-oxo-7,8-dihydroguanine DNA N-glycosylase activity"/>
    <property type="evidence" value="ECO:0007669"/>
    <property type="project" value="TreeGrafter"/>
</dbReference>
<dbReference type="GO" id="GO:0140078">
    <property type="term" value="F:class I DNA-(apurinic or apyrimidinic site) endonuclease activity"/>
    <property type="evidence" value="ECO:0007669"/>
    <property type="project" value="UniProtKB-EC"/>
</dbReference>
<dbReference type="GO" id="GO:0003684">
    <property type="term" value="F:damaged DNA binding"/>
    <property type="evidence" value="ECO:0007669"/>
    <property type="project" value="InterPro"/>
</dbReference>
<dbReference type="GO" id="GO:0008270">
    <property type="term" value="F:zinc ion binding"/>
    <property type="evidence" value="ECO:0007669"/>
    <property type="project" value="UniProtKB-UniRule"/>
</dbReference>
<dbReference type="GO" id="GO:0006284">
    <property type="term" value="P:base-excision repair"/>
    <property type="evidence" value="ECO:0007669"/>
    <property type="project" value="InterPro"/>
</dbReference>
<dbReference type="CDD" id="cd08966">
    <property type="entry name" value="EcFpg-like_N"/>
    <property type="match status" value="1"/>
</dbReference>
<dbReference type="FunFam" id="1.10.8.50:FF:000003">
    <property type="entry name" value="Formamidopyrimidine-DNA glycosylase"/>
    <property type="match status" value="1"/>
</dbReference>
<dbReference type="FunFam" id="3.20.190.10:FF:000006">
    <property type="entry name" value="Formamidopyrimidine-DNA glycosylase"/>
    <property type="match status" value="1"/>
</dbReference>
<dbReference type="Gene3D" id="1.10.8.50">
    <property type="match status" value="1"/>
</dbReference>
<dbReference type="Gene3D" id="3.20.190.10">
    <property type="entry name" value="MutM-like, N-terminal"/>
    <property type="match status" value="1"/>
</dbReference>
<dbReference type="HAMAP" id="MF_00103">
    <property type="entry name" value="Fapy_DNA_glycosyl"/>
    <property type="match status" value="1"/>
</dbReference>
<dbReference type="InterPro" id="IPR015886">
    <property type="entry name" value="DNA_glyclase/AP_lyase_DNA-bd"/>
</dbReference>
<dbReference type="InterPro" id="IPR015887">
    <property type="entry name" value="DNA_glyclase_Znf_dom_DNA_BS"/>
</dbReference>
<dbReference type="InterPro" id="IPR020629">
    <property type="entry name" value="Formamido-pyr_DNA_Glyclase"/>
</dbReference>
<dbReference type="InterPro" id="IPR012319">
    <property type="entry name" value="FPG_cat"/>
</dbReference>
<dbReference type="InterPro" id="IPR035937">
    <property type="entry name" value="MutM-like_N-ter"/>
</dbReference>
<dbReference type="InterPro" id="IPR010979">
    <property type="entry name" value="Ribosomal_uS13-like_H2TH"/>
</dbReference>
<dbReference type="InterPro" id="IPR000214">
    <property type="entry name" value="Znf_DNA_glyclase/AP_lyase"/>
</dbReference>
<dbReference type="NCBIfam" id="TIGR00577">
    <property type="entry name" value="fpg"/>
    <property type="match status" value="1"/>
</dbReference>
<dbReference type="NCBIfam" id="NF002211">
    <property type="entry name" value="PRK01103.1"/>
    <property type="match status" value="1"/>
</dbReference>
<dbReference type="PANTHER" id="PTHR22993">
    <property type="entry name" value="FORMAMIDOPYRIMIDINE-DNA GLYCOSYLASE"/>
    <property type="match status" value="1"/>
</dbReference>
<dbReference type="PANTHER" id="PTHR22993:SF9">
    <property type="entry name" value="FORMAMIDOPYRIMIDINE-DNA GLYCOSYLASE"/>
    <property type="match status" value="1"/>
</dbReference>
<dbReference type="Pfam" id="PF01149">
    <property type="entry name" value="Fapy_DNA_glyco"/>
    <property type="match status" value="1"/>
</dbReference>
<dbReference type="Pfam" id="PF06831">
    <property type="entry name" value="H2TH"/>
    <property type="match status" value="1"/>
</dbReference>
<dbReference type="SMART" id="SM00898">
    <property type="entry name" value="Fapy_DNA_glyco"/>
    <property type="match status" value="1"/>
</dbReference>
<dbReference type="SMART" id="SM01232">
    <property type="entry name" value="H2TH"/>
    <property type="match status" value="1"/>
</dbReference>
<dbReference type="SUPFAM" id="SSF57716">
    <property type="entry name" value="Glucocorticoid receptor-like (DNA-binding domain)"/>
    <property type="match status" value="1"/>
</dbReference>
<dbReference type="SUPFAM" id="SSF81624">
    <property type="entry name" value="N-terminal domain of MutM-like DNA repair proteins"/>
    <property type="match status" value="1"/>
</dbReference>
<dbReference type="SUPFAM" id="SSF46946">
    <property type="entry name" value="S13-like H2TH domain"/>
    <property type="match status" value="1"/>
</dbReference>
<dbReference type="PROSITE" id="PS51068">
    <property type="entry name" value="FPG_CAT"/>
    <property type="match status" value="1"/>
</dbReference>
<dbReference type="PROSITE" id="PS01242">
    <property type="entry name" value="ZF_FPG_1"/>
    <property type="match status" value="1"/>
</dbReference>
<dbReference type="PROSITE" id="PS51066">
    <property type="entry name" value="ZF_FPG_2"/>
    <property type="match status" value="1"/>
</dbReference>
<gene>
    <name evidence="2" type="primary">mutM</name>
    <name evidence="2" type="synonym">fpg</name>
    <name type="ordered locus">SAV_2664</name>
</gene>
<keyword id="KW-0227">DNA damage</keyword>
<keyword id="KW-0234">DNA repair</keyword>
<keyword id="KW-0238">DNA-binding</keyword>
<keyword id="KW-0326">Glycosidase</keyword>
<keyword id="KW-0378">Hydrolase</keyword>
<keyword id="KW-0456">Lyase</keyword>
<keyword id="KW-0479">Metal-binding</keyword>
<keyword id="KW-0511">Multifunctional enzyme</keyword>
<keyword id="KW-1185">Reference proteome</keyword>
<keyword id="KW-0862">Zinc</keyword>
<keyword id="KW-0863">Zinc-finger</keyword>
<proteinExistence type="inferred from homology"/>
<feature type="initiator methionine" description="Removed" evidence="1">
    <location>
        <position position="1"/>
    </location>
</feature>
<feature type="chain" id="PRO_0000170866" description="Formamidopyrimidine-DNA glycosylase">
    <location>
        <begin position="2"/>
        <end position="286"/>
    </location>
</feature>
<feature type="zinc finger region" description="FPG-type" evidence="2">
    <location>
        <begin position="246"/>
        <end position="280"/>
    </location>
</feature>
<feature type="active site" description="Schiff-base intermediate with DNA" evidence="2">
    <location>
        <position position="2"/>
    </location>
</feature>
<feature type="active site" description="Proton donor" evidence="2">
    <location>
        <position position="3"/>
    </location>
</feature>
<feature type="active site" description="Proton donor; for beta-elimination activity" evidence="2">
    <location>
        <position position="61"/>
    </location>
</feature>
<feature type="active site" description="Proton donor; for delta-elimination activity" evidence="2">
    <location>
        <position position="270"/>
    </location>
</feature>
<feature type="binding site" evidence="2">
    <location>
        <position position="96"/>
    </location>
    <ligand>
        <name>DNA</name>
        <dbReference type="ChEBI" id="CHEBI:16991"/>
    </ligand>
</feature>
<feature type="binding site" evidence="2">
    <location>
        <position position="117"/>
    </location>
    <ligand>
        <name>DNA</name>
        <dbReference type="ChEBI" id="CHEBI:16991"/>
    </ligand>
</feature>
<feature type="binding site" evidence="2">
    <location>
        <position position="160"/>
    </location>
    <ligand>
        <name>DNA</name>
        <dbReference type="ChEBI" id="CHEBI:16991"/>
    </ligand>
</feature>
<accession>Q82JU0</accession>
<evidence type="ECO:0000250" key="1"/>
<evidence type="ECO:0000255" key="2">
    <source>
        <dbReference type="HAMAP-Rule" id="MF_00103"/>
    </source>
</evidence>